<evidence type="ECO:0000255" key="1"/>
<evidence type="ECO:0000255" key="2">
    <source>
        <dbReference type="PROSITE-ProRule" id="PRU00521"/>
    </source>
</evidence>
<evidence type="ECO:0000269" key="3">
    <source>
    </source>
</evidence>
<evidence type="ECO:0000305" key="4"/>
<organism>
    <name type="scientific">Homo sapiens</name>
    <name type="common">Human</name>
    <dbReference type="NCBI Taxonomy" id="9606"/>
    <lineage>
        <taxon>Eukaryota</taxon>
        <taxon>Metazoa</taxon>
        <taxon>Chordata</taxon>
        <taxon>Craniata</taxon>
        <taxon>Vertebrata</taxon>
        <taxon>Euteleostomi</taxon>
        <taxon>Mammalia</taxon>
        <taxon>Eutheria</taxon>
        <taxon>Euarchontoglires</taxon>
        <taxon>Primates</taxon>
        <taxon>Haplorrhini</taxon>
        <taxon>Catarrhini</taxon>
        <taxon>Hominidae</taxon>
        <taxon>Homo</taxon>
    </lineage>
</organism>
<name>OR5H1_HUMAN</name>
<dbReference type="EMBL" id="AC117460">
    <property type="status" value="NOT_ANNOTATED_CDS"/>
    <property type="molecule type" value="Genomic_DNA"/>
</dbReference>
<dbReference type="EMBL" id="X64988">
    <property type="status" value="NOT_ANNOTATED_CDS"/>
    <property type="molecule type" value="mRNA"/>
</dbReference>
<dbReference type="CCDS" id="CCDS33797.1"/>
<dbReference type="RefSeq" id="NP_001005338.1">
    <property type="nucleotide sequence ID" value="NM_001005338.2"/>
</dbReference>
<dbReference type="SMR" id="A6NKK0"/>
<dbReference type="BioGRID" id="117686">
    <property type="interactions" value="40"/>
</dbReference>
<dbReference type="FunCoup" id="A6NKK0">
    <property type="interactions" value="417"/>
</dbReference>
<dbReference type="IntAct" id="A6NKK0">
    <property type="interactions" value="8"/>
</dbReference>
<dbReference type="STRING" id="9606.ENSP00000492953"/>
<dbReference type="GlyCosmos" id="A6NKK0">
    <property type="glycosylation" value="1 site, No reported glycans"/>
</dbReference>
<dbReference type="GlyGen" id="A6NKK0">
    <property type="glycosylation" value="1 site"/>
</dbReference>
<dbReference type="iPTMnet" id="A6NKK0"/>
<dbReference type="PhosphoSitePlus" id="A6NKK0"/>
<dbReference type="BioMuta" id="OR5H1"/>
<dbReference type="MassIVE" id="A6NKK0"/>
<dbReference type="PaxDb" id="9606-ENSP00000346575"/>
<dbReference type="Antibodypedia" id="32126">
    <property type="antibodies" value="47 antibodies from 16 providers"/>
</dbReference>
<dbReference type="DNASU" id="26341"/>
<dbReference type="Ensembl" id="ENST00000641874.1">
    <property type="protein sequence ID" value="ENSP00000492953.1"/>
    <property type="gene ID" value="ENSG00000231192.3"/>
</dbReference>
<dbReference type="GeneID" id="26341"/>
<dbReference type="KEGG" id="hsa:26341"/>
<dbReference type="MANE-Select" id="ENST00000641874.1">
    <property type="protein sequence ID" value="ENSP00000492953.1"/>
    <property type="RefSeq nucleotide sequence ID" value="NM_001005338.2"/>
    <property type="RefSeq protein sequence ID" value="NP_001005338.1"/>
</dbReference>
<dbReference type="UCSC" id="uc011bgt.2">
    <property type="organism name" value="human"/>
</dbReference>
<dbReference type="AGR" id="HGNC:8346"/>
<dbReference type="CTD" id="26341"/>
<dbReference type="GeneCards" id="OR5H1"/>
<dbReference type="HGNC" id="HGNC:8346">
    <property type="gene designation" value="OR5H1"/>
</dbReference>
<dbReference type="HPA" id="ENSG00000231192">
    <property type="expression patterns" value="Not detected"/>
</dbReference>
<dbReference type="neXtProt" id="NX_A6NKK0"/>
<dbReference type="PharmGKB" id="PA32532"/>
<dbReference type="VEuPathDB" id="HostDB:ENSG00000231192"/>
<dbReference type="eggNOG" id="ENOG502T9JQ">
    <property type="taxonomic scope" value="Eukaryota"/>
</dbReference>
<dbReference type="GeneTree" id="ENSGT01120000271834"/>
<dbReference type="HOGENOM" id="CLU_012526_8_1_1"/>
<dbReference type="InParanoid" id="A6NKK0"/>
<dbReference type="OMA" id="HAIIHES"/>
<dbReference type="OrthoDB" id="9615015at2759"/>
<dbReference type="PAN-GO" id="A6NKK0">
    <property type="GO annotations" value="2 GO annotations based on evolutionary models"/>
</dbReference>
<dbReference type="PhylomeDB" id="A6NKK0"/>
<dbReference type="TreeFam" id="TF352737"/>
<dbReference type="PathwayCommons" id="A6NKK0"/>
<dbReference type="Reactome" id="R-HSA-9752946">
    <property type="pathway name" value="Expression and translocation of olfactory receptors"/>
</dbReference>
<dbReference type="BioGRID-ORCS" id="26341">
    <property type="hits" value="13 hits in 631 CRISPR screens"/>
</dbReference>
<dbReference type="GenomeRNAi" id="26341"/>
<dbReference type="Pharos" id="A6NKK0">
    <property type="development level" value="Tdark"/>
</dbReference>
<dbReference type="PRO" id="PR:A6NKK0"/>
<dbReference type="Proteomes" id="UP000005640">
    <property type="component" value="Chromosome 3"/>
</dbReference>
<dbReference type="RNAct" id="A6NKK0">
    <property type="molecule type" value="protein"/>
</dbReference>
<dbReference type="Bgee" id="ENSG00000231192">
    <property type="expression patterns" value="Expressed in right uterine tube and 1 other cell type or tissue"/>
</dbReference>
<dbReference type="ExpressionAtlas" id="A6NKK0">
    <property type="expression patterns" value="baseline and differential"/>
</dbReference>
<dbReference type="GO" id="GO:0005886">
    <property type="term" value="C:plasma membrane"/>
    <property type="evidence" value="ECO:0007669"/>
    <property type="project" value="UniProtKB-SubCell"/>
</dbReference>
<dbReference type="GO" id="GO:0004930">
    <property type="term" value="F:G protein-coupled receptor activity"/>
    <property type="evidence" value="ECO:0007669"/>
    <property type="project" value="UniProtKB-KW"/>
</dbReference>
<dbReference type="GO" id="GO:0005549">
    <property type="term" value="F:odorant binding"/>
    <property type="evidence" value="ECO:0000318"/>
    <property type="project" value="GO_Central"/>
</dbReference>
<dbReference type="GO" id="GO:0004984">
    <property type="term" value="F:olfactory receptor activity"/>
    <property type="evidence" value="ECO:0000318"/>
    <property type="project" value="GO_Central"/>
</dbReference>
<dbReference type="FunFam" id="1.10.1220.70:FF:000001">
    <property type="entry name" value="Olfactory receptor"/>
    <property type="match status" value="1"/>
</dbReference>
<dbReference type="FunFam" id="1.20.1070.10:FF:000004">
    <property type="entry name" value="Olfactory receptor"/>
    <property type="match status" value="1"/>
</dbReference>
<dbReference type="Gene3D" id="1.20.1070.10">
    <property type="entry name" value="Rhodopsin 7-helix transmembrane proteins"/>
    <property type="match status" value="1"/>
</dbReference>
<dbReference type="InterPro" id="IPR000276">
    <property type="entry name" value="GPCR_Rhodpsn"/>
</dbReference>
<dbReference type="InterPro" id="IPR017452">
    <property type="entry name" value="GPCR_Rhodpsn_7TM"/>
</dbReference>
<dbReference type="InterPro" id="IPR000725">
    <property type="entry name" value="Olfact_rcpt"/>
</dbReference>
<dbReference type="PANTHER" id="PTHR48018">
    <property type="entry name" value="OLFACTORY RECEPTOR"/>
    <property type="match status" value="1"/>
</dbReference>
<dbReference type="Pfam" id="PF13853">
    <property type="entry name" value="7tm_4"/>
    <property type="match status" value="1"/>
</dbReference>
<dbReference type="PRINTS" id="PR00237">
    <property type="entry name" value="GPCRRHODOPSN"/>
</dbReference>
<dbReference type="PRINTS" id="PR00245">
    <property type="entry name" value="OLFACTORYR"/>
</dbReference>
<dbReference type="SUPFAM" id="SSF81321">
    <property type="entry name" value="Family A G protein-coupled receptor-like"/>
    <property type="match status" value="1"/>
</dbReference>
<dbReference type="PROSITE" id="PS00237">
    <property type="entry name" value="G_PROTEIN_RECEP_F1_1"/>
    <property type="match status" value="1"/>
</dbReference>
<dbReference type="PROSITE" id="PS50262">
    <property type="entry name" value="G_PROTEIN_RECEP_F1_2"/>
    <property type="match status" value="1"/>
</dbReference>
<protein>
    <recommendedName>
        <fullName>Olfactory receptor 5H1</fullName>
    </recommendedName>
    <alternativeName>
        <fullName>HTPCRX14</fullName>
    </alternativeName>
</protein>
<accession>A6NKK0</accession>
<feature type="chain" id="PRO_0000310867" description="Olfactory receptor 5H1">
    <location>
        <begin position="1"/>
        <end position="313"/>
    </location>
</feature>
<feature type="topological domain" description="Extracellular" evidence="1">
    <location>
        <begin position="1"/>
        <end position="28"/>
    </location>
</feature>
<feature type="transmembrane region" description="Helical; Name=1" evidence="1">
    <location>
        <begin position="29"/>
        <end position="49"/>
    </location>
</feature>
<feature type="topological domain" description="Cytoplasmic" evidence="1">
    <location>
        <begin position="50"/>
        <end position="56"/>
    </location>
</feature>
<feature type="transmembrane region" description="Helical; Name=2" evidence="1">
    <location>
        <begin position="57"/>
        <end position="77"/>
    </location>
</feature>
<feature type="topological domain" description="Extracellular" evidence="1">
    <location>
        <begin position="78"/>
        <end position="98"/>
    </location>
</feature>
<feature type="transmembrane region" description="Helical; Name=3" evidence="1">
    <location>
        <begin position="99"/>
        <end position="119"/>
    </location>
</feature>
<feature type="topological domain" description="Cytoplasmic" evidence="1">
    <location>
        <begin position="120"/>
        <end position="143"/>
    </location>
</feature>
<feature type="transmembrane region" description="Helical; Name=4" evidence="1">
    <location>
        <begin position="144"/>
        <end position="164"/>
    </location>
</feature>
<feature type="topological domain" description="Extracellular" evidence="1">
    <location>
        <begin position="165"/>
        <end position="195"/>
    </location>
</feature>
<feature type="transmembrane region" description="Helical; Name=5" evidence="1">
    <location>
        <begin position="196"/>
        <end position="216"/>
    </location>
</feature>
<feature type="topological domain" description="Cytoplasmic" evidence="1">
    <location>
        <begin position="217"/>
        <end position="240"/>
    </location>
</feature>
<feature type="transmembrane region" description="Helical; Name=6" evidence="1">
    <location>
        <begin position="241"/>
        <end position="261"/>
    </location>
</feature>
<feature type="topological domain" description="Extracellular" evidence="1">
    <location>
        <begin position="262"/>
        <end position="271"/>
    </location>
</feature>
<feature type="transmembrane region" description="Helical; Name=7" evidence="1">
    <location>
        <begin position="272"/>
        <end position="292"/>
    </location>
</feature>
<feature type="topological domain" description="Cytoplasmic" evidence="1">
    <location>
        <begin position="293"/>
        <end position="313"/>
    </location>
</feature>
<feature type="glycosylation site" description="N-linked (GlcNAc...) asparagine" evidence="1">
    <location>
        <position position="5"/>
    </location>
</feature>
<feature type="disulfide bond" evidence="2">
    <location>
        <begin position="97"/>
        <end position="179"/>
    </location>
</feature>
<feature type="sequence variant" id="VAR_037089" description="In dbSNP:rs5009896.">
    <original>S</original>
    <variation>T</variation>
    <location>
        <position position="148"/>
    </location>
</feature>
<feature type="sequence variant" id="VAR_037091" description="In dbSNP:rs9845327." evidence="3">
    <original>I</original>
    <variation>L</variation>
    <location>
        <position position="153"/>
    </location>
</feature>
<feature type="sequence variant" id="VAR_037092" description="In dbSNP:rs9826076." evidence="3">
    <original>T</original>
    <variation>I</variation>
    <location>
        <position position="181"/>
    </location>
</feature>
<feature type="sequence variant" id="VAR_037093" description="In dbSNP:rs9849637.">
    <original>S</original>
    <variation>T</variation>
    <location>
        <position position="230"/>
    </location>
</feature>
<feature type="sequence conflict" description="In Ref. 2; X64988." evidence="4" ref="2">
    <original>K</original>
    <variation>R</variation>
    <location>
        <position position="228"/>
    </location>
</feature>
<proteinExistence type="evidence at protein level"/>
<reference key="1">
    <citation type="journal article" date="2006" name="Nature">
        <title>The DNA sequence, annotation and analysis of human chromosome 3.</title>
        <authorList>
            <person name="Muzny D.M."/>
            <person name="Scherer S.E."/>
            <person name="Kaul R."/>
            <person name="Wang J."/>
            <person name="Yu J."/>
            <person name="Sudbrak R."/>
            <person name="Buhay C.J."/>
            <person name="Chen R."/>
            <person name="Cree A."/>
            <person name="Ding Y."/>
            <person name="Dugan-Rocha S."/>
            <person name="Gill R."/>
            <person name="Gunaratne P."/>
            <person name="Harris R.A."/>
            <person name="Hawes A.C."/>
            <person name="Hernandez J."/>
            <person name="Hodgson A.V."/>
            <person name="Hume J."/>
            <person name="Jackson A."/>
            <person name="Khan Z.M."/>
            <person name="Kovar-Smith C."/>
            <person name="Lewis L.R."/>
            <person name="Lozado R.J."/>
            <person name="Metzker M.L."/>
            <person name="Milosavljevic A."/>
            <person name="Miner G.R."/>
            <person name="Morgan M.B."/>
            <person name="Nazareth L.V."/>
            <person name="Scott G."/>
            <person name="Sodergren E."/>
            <person name="Song X.-Z."/>
            <person name="Steffen D."/>
            <person name="Wei S."/>
            <person name="Wheeler D.A."/>
            <person name="Wright M.W."/>
            <person name="Worley K.C."/>
            <person name="Yuan Y."/>
            <person name="Zhang Z."/>
            <person name="Adams C.Q."/>
            <person name="Ansari-Lari M.A."/>
            <person name="Ayele M."/>
            <person name="Brown M.J."/>
            <person name="Chen G."/>
            <person name="Chen Z."/>
            <person name="Clendenning J."/>
            <person name="Clerc-Blankenburg K.P."/>
            <person name="Chen R."/>
            <person name="Chen Z."/>
            <person name="Davis C."/>
            <person name="Delgado O."/>
            <person name="Dinh H.H."/>
            <person name="Dong W."/>
            <person name="Draper H."/>
            <person name="Ernst S."/>
            <person name="Fu G."/>
            <person name="Gonzalez-Garay M.L."/>
            <person name="Garcia D.K."/>
            <person name="Gillett W."/>
            <person name="Gu J."/>
            <person name="Hao B."/>
            <person name="Haugen E."/>
            <person name="Havlak P."/>
            <person name="He X."/>
            <person name="Hennig S."/>
            <person name="Hu S."/>
            <person name="Huang W."/>
            <person name="Jackson L.R."/>
            <person name="Jacob L.S."/>
            <person name="Kelly S.H."/>
            <person name="Kube M."/>
            <person name="Levy R."/>
            <person name="Li Z."/>
            <person name="Liu B."/>
            <person name="Liu J."/>
            <person name="Liu W."/>
            <person name="Lu J."/>
            <person name="Maheshwari M."/>
            <person name="Nguyen B.-V."/>
            <person name="Okwuonu G.O."/>
            <person name="Palmeiri A."/>
            <person name="Pasternak S."/>
            <person name="Perez L.M."/>
            <person name="Phelps K.A."/>
            <person name="Plopper F.J."/>
            <person name="Qiang B."/>
            <person name="Raymond C."/>
            <person name="Rodriguez R."/>
            <person name="Saenphimmachak C."/>
            <person name="Santibanez J."/>
            <person name="Shen H."/>
            <person name="Shen Y."/>
            <person name="Subramanian S."/>
            <person name="Tabor P.E."/>
            <person name="Verduzco D."/>
            <person name="Waldron L."/>
            <person name="Wang J."/>
            <person name="Wang J."/>
            <person name="Wang Q."/>
            <person name="Williams G.A."/>
            <person name="Wong G.K.-S."/>
            <person name="Yao Z."/>
            <person name="Zhang J."/>
            <person name="Zhang X."/>
            <person name="Zhao G."/>
            <person name="Zhou J."/>
            <person name="Zhou Y."/>
            <person name="Nelson D."/>
            <person name="Lehrach H."/>
            <person name="Reinhardt R."/>
            <person name="Naylor S.L."/>
            <person name="Yang H."/>
            <person name="Olson M."/>
            <person name="Weinstock G."/>
            <person name="Gibbs R.A."/>
        </authorList>
    </citation>
    <scope>NUCLEOTIDE SEQUENCE [LARGE SCALE GENOMIC DNA]</scope>
</reference>
<reference key="2">
    <citation type="journal article" date="1992" name="Nature">
        <title>Expression of members of the putative olfactory receptor gene family in mammalian germ cells.</title>
        <authorList>
            <person name="Parmentier M."/>
            <person name="Libert F."/>
            <person name="Schurmans S."/>
            <person name="Schiffmann S."/>
            <person name="Lefort A."/>
            <person name="Eggerickx D."/>
            <person name="Ledent C."/>
            <person name="Mollereau C."/>
            <person name="Gerard C."/>
            <person name="Perret J."/>
            <person name="Grootegoed A."/>
            <person name="Vassart G."/>
        </authorList>
    </citation>
    <scope>NUCLEOTIDE SEQUENCE [MRNA] OF 126-239</scope>
    <scope>VARIANTS LEU-153 AND ILE-181</scope>
    <source>
        <tissue>Testis</tissue>
    </source>
</reference>
<sequence length="313" mass="35387">MEEENATLLTEFVLTGFLYQPQWKIPLFLAFLVIYLITIMGNLGLIAVIWKDPHLHIPMYLLLGNLAFVDAWISSTVTPKMLNNFLAKSKMISLSECKIQFFSFAISVTTECFLLATMAYDRYVAICKPLLYPAIMTNGLCIRLLILSYVGGILHALIHEGFLFRLTFCNSNIVHHIYCDTIPLSKISCTDSSINFLMVFIFSGSIQVFSIVTILVSYTFVLFAILKKKSDKGVRKAFSTCGAHLFSVSLYYGPLLFIYVGPASPQADDQDMVEPLFYTVIIPLLNPIIYSLRNKQVTVSFTKMLKKHVKVSY</sequence>
<gene>
    <name type="primary">OR5H1</name>
</gene>
<keyword id="KW-1003">Cell membrane</keyword>
<keyword id="KW-1015">Disulfide bond</keyword>
<keyword id="KW-0297">G-protein coupled receptor</keyword>
<keyword id="KW-0325">Glycoprotein</keyword>
<keyword id="KW-0472">Membrane</keyword>
<keyword id="KW-0552">Olfaction</keyword>
<keyword id="KW-0675">Receptor</keyword>
<keyword id="KW-1185">Reference proteome</keyword>
<keyword id="KW-0716">Sensory transduction</keyword>
<keyword id="KW-0807">Transducer</keyword>
<keyword id="KW-0812">Transmembrane</keyword>
<keyword id="KW-1133">Transmembrane helix</keyword>
<comment type="function">
    <text evidence="4">Odorant receptor.</text>
</comment>
<comment type="interaction">
    <interactant intactId="EBI-23725364">
        <id>A6NKK0</id>
    </interactant>
    <interactant intactId="EBI-2558739">
        <id>Q70IA6</id>
        <label>MOB2</label>
    </interactant>
    <organismsDiffer>false</organismsDiffer>
    <experiments>3</experiments>
</comment>
<comment type="subcellular location">
    <subcellularLocation>
        <location>Cell membrane</location>
        <topology>Multi-pass membrane protein</topology>
    </subcellularLocation>
</comment>
<comment type="similarity">
    <text evidence="2">Belongs to the G-protein coupled receptor 1 family.</text>
</comment>
<comment type="online information" name="Human Olfactory Receptor Data Exploratorium (HORDE)">
    <link uri="http://genome.weizmann.ac.il/horde/card/index/symbol:OR5H1"/>
</comment>